<proteinExistence type="inferred from homology"/>
<organism>
    <name type="scientific">Burkholderia cenocepacia (strain HI2424)</name>
    <dbReference type="NCBI Taxonomy" id="331272"/>
    <lineage>
        <taxon>Bacteria</taxon>
        <taxon>Pseudomonadati</taxon>
        <taxon>Pseudomonadota</taxon>
        <taxon>Betaproteobacteria</taxon>
        <taxon>Burkholderiales</taxon>
        <taxon>Burkholderiaceae</taxon>
        <taxon>Burkholderia</taxon>
        <taxon>Burkholderia cepacia complex</taxon>
    </lineage>
</organism>
<accession>A0K6Q3</accession>
<keyword id="KW-0520">NAD</keyword>
<keyword id="KW-0560">Oxidoreductase</keyword>
<comment type="function">
    <text evidence="1">Involved in the oxidation of myo-inositol (MI) to 2-keto-myo-inositol (2KMI or 2-inosose).</text>
</comment>
<comment type="catalytic activity">
    <reaction evidence="1">
        <text>myo-inositol + NAD(+) = scyllo-inosose + NADH + H(+)</text>
        <dbReference type="Rhea" id="RHEA:16949"/>
        <dbReference type="ChEBI" id="CHEBI:15378"/>
        <dbReference type="ChEBI" id="CHEBI:17268"/>
        <dbReference type="ChEBI" id="CHEBI:17811"/>
        <dbReference type="ChEBI" id="CHEBI:57540"/>
        <dbReference type="ChEBI" id="CHEBI:57945"/>
        <dbReference type="EC" id="1.1.1.18"/>
    </reaction>
</comment>
<comment type="subunit">
    <text evidence="1">Homotetramer.</text>
</comment>
<comment type="similarity">
    <text evidence="1">Belongs to the Gfo/Idh/MocA family.</text>
</comment>
<gene>
    <name evidence="1" type="primary">iolG</name>
    <name type="ordered locus">Bcen2424_1428</name>
</gene>
<feature type="chain" id="PRO_0000352561" description="Inositol 2-dehydrogenase">
    <location>
        <begin position="1"/>
        <end position="337"/>
    </location>
</feature>
<dbReference type="EC" id="1.1.1.18" evidence="1"/>
<dbReference type="EMBL" id="CP000458">
    <property type="protein sequence ID" value="ABK08180.1"/>
    <property type="molecule type" value="Genomic_DNA"/>
</dbReference>
<dbReference type="RefSeq" id="WP_011545209.1">
    <property type="nucleotide sequence ID" value="NC_008542.1"/>
</dbReference>
<dbReference type="SMR" id="A0K6Q3"/>
<dbReference type="KEGG" id="bch:Bcen2424_1428"/>
<dbReference type="HOGENOM" id="CLU_023194_0_1_4"/>
<dbReference type="GO" id="GO:0050112">
    <property type="term" value="F:inositol 2-dehydrogenase (NAD+) activity"/>
    <property type="evidence" value="ECO:0007669"/>
    <property type="project" value="UniProtKB-UniRule"/>
</dbReference>
<dbReference type="GO" id="GO:0000166">
    <property type="term" value="F:nucleotide binding"/>
    <property type="evidence" value="ECO:0007669"/>
    <property type="project" value="InterPro"/>
</dbReference>
<dbReference type="GO" id="GO:0019310">
    <property type="term" value="P:inositol catabolic process"/>
    <property type="evidence" value="ECO:0007669"/>
    <property type="project" value="UniProtKB-UniRule"/>
</dbReference>
<dbReference type="Gene3D" id="3.30.360.10">
    <property type="entry name" value="Dihydrodipicolinate Reductase, domain 2"/>
    <property type="match status" value="1"/>
</dbReference>
<dbReference type="Gene3D" id="3.40.50.720">
    <property type="entry name" value="NAD(P)-binding Rossmann-like Domain"/>
    <property type="match status" value="1"/>
</dbReference>
<dbReference type="HAMAP" id="MF_01671">
    <property type="entry name" value="IolG"/>
    <property type="match status" value="1"/>
</dbReference>
<dbReference type="InterPro" id="IPR050424">
    <property type="entry name" value="Gfo-Idh-MocA_inositol_DH"/>
</dbReference>
<dbReference type="InterPro" id="IPR004104">
    <property type="entry name" value="Gfo/Idh/MocA-like_OxRdtase_C"/>
</dbReference>
<dbReference type="InterPro" id="IPR000683">
    <property type="entry name" value="Gfo/Idh/MocA-like_OxRdtase_N"/>
</dbReference>
<dbReference type="InterPro" id="IPR023794">
    <property type="entry name" value="MI/DCI_dehydrogenase"/>
</dbReference>
<dbReference type="InterPro" id="IPR036291">
    <property type="entry name" value="NAD(P)-bd_dom_sf"/>
</dbReference>
<dbReference type="PANTHER" id="PTHR43593">
    <property type="match status" value="1"/>
</dbReference>
<dbReference type="PANTHER" id="PTHR43593:SF1">
    <property type="entry name" value="INOSITOL 2-DEHYDROGENASE"/>
    <property type="match status" value="1"/>
</dbReference>
<dbReference type="Pfam" id="PF01408">
    <property type="entry name" value="GFO_IDH_MocA"/>
    <property type="match status" value="1"/>
</dbReference>
<dbReference type="Pfam" id="PF02894">
    <property type="entry name" value="GFO_IDH_MocA_C"/>
    <property type="match status" value="1"/>
</dbReference>
<dbReference type="SUPFAM" id="SSF55347">
    <property type="entry name" value="Glyceraldehyde-3-phosphate dehydrogenase-like, C-terminal domain"/>
    <property type="match status" value="1"/>
</dbReference>
<dbReference type="SUPFAM" id="SSF51735">
    <property type="entry name" value="NAD(P)-binding Rossmann-fold domains"/>
    <property type="match status" value="1"/>
</dbReference>
<evidence type="ECO:0000255" key="1">
    <source>
        <dbReference type="HAMAP-Rule" id="MF_01671"/>
    </source>
</evidence>
<sequence length="337" mass="36547">MTLQIGVIGCGAIGQDHIRRLTRTLSGARVVAVNDIDPQQARDAVTKYGLDAEIYGDGHEVVAAADVQAVLVTSWGPTHEAFVLDAIAHGKPVFCEKPLAVTAEGCMRIVEAEVAHGKRLVQVGFMRPYDEGYRALKRVIDSGQIGAPLMLHCAHRNQSVGERYTTDMAITDTLIHELDVLRWLLGEDYASAQVVYPKKTRHASAHLADPQIVLLETASGVRIDVEIFVNCQYGYDIQCEVVGEQGIAKLPDPPAVGLKHAARQSVEIMTDWKERFIASYDVELQAFIDGVRQGALTGPSAWDGYAAAVAADACVRAQQSGAVEPIAMAERPAFYRG</sequence>
<name>IOLG_BURCH</name>
<reference key="1">
    <citation type="submission" date="2006-08" db="EMBL/GenBank/DDBJ databases">
        <title>Complete sequence of chromosome 1 of Burkholderia cenocepacia HI2424.</title>
        <authorList>
            <person name="Copeland A."/>
            <person name="Lucas S."/>
            <person name="Lapidus A."/>
            <person name="Barry K."/>
            <person name="Detter J.C."/>
            <person name="Glavina del Rio T."/>
            <person name="Hammon N."/>
            <person name="Israni S."/>
            <person name="Pitluck S."/>
            <person name="Chain P."/>
            <person name="Malfatti S."/>
            <person name="Shin M."/>
            <person name="Vergez L."/>
            <person name="Schmutz J."/>
            <person name="Larimer F."/>
            <person name="Land M."/>
            <person name="Hauser L."/>
            <person name="Kyrpides N."/>
            <person name="Kim E."/>
            <person name="LiPuma J.J."/>
            <person name="Gonzalez C.F."/>
            <person name="Konstantinidis K."/>
            <person name="Tiedje J.M."/>
            <person name="Richardson P."/>
        </authorList>
    </citation>
    <scope>NUCLEOTIDE SEQUENCE [LARGE SCALE GENOMIC DNA]</scope>
    <source>
        <strain>HI2424</strain>
    </source>
</reference>
<protein>
    <recommendedName>
        <fullName evidence="1">Inositol 2-dehydrogenase</fullName>
        <ecNumber evidence="1">1.1.1.18</ecNumber>
    </recommendedName>
    <alternativeName>
        <fullName evidence="1">Myo-inositol 2-dehydrogenase</fullName>
        <shortName evidence="1">MI 2-dehydrogenase</shortName>
    </alternativeName>
</protein>